<dbReference type="EC" id="4.3.1.3" evidence="1"/>
<dbReference type="EMBL" id="CP000003">
    <property type="protein sequence ID" value="AAT87909.1"/>
    <property type="status" value="ALT_SEQ"/>
    <property type="molecule type" value="Genomic_DNA"/>
</dbReference>
<dbReference type="SMR" id="Q5X9K4"/>
<dbReference type="KEGG" id="spa:M6_Spy1774"/>
<dbReference type="HOGENOM" id="CLU_014801_4_0_9"/>
<dbReference type="UniPathway" id="UPA00379">
    <property type="reaction ID" value="UER00549"/>
</dbReference>
<dbReference type="Proteomes" id="UP000001167">
    <property type="component" value="Chromosome"/>
</dbReference>
<dbReference type="GO" id="GO:0005737">
    <property type="term" value="C:cytoplasm"/>
    <property type="evidence" value="ECO:0007669"/>
    <property type="project" value="UniProtKB-SubCell"/>
</dbReference>
<dbReference type="GO" id="GO:0004397">
    <property type="term" value="F:histidine ammonia-lyase activity"/>
    <property type="evidence" value="ECO:0007669"/>
    <property type="project" value="UniProtKB-UniRule"/>
</dbReference>
<dbReference type="GO" id="GO:0019556">
    <property type="term" value="P:L-histidine catabolic process to glutamate and formamide"/>
    <property type="evidence" value="ECO:0007669"/>
    <property type="project" value="UniProtKB-UniPathway"/>
</dbReference>
<dbReference type="GO" id="GO:0019557">
    <property type="term" value="P:L-histidine catabolic process to glutamate and formate"/>
    <property type="evidence" value="ECO:0007669"/>
    <property type="project" value="UniProtKB-UniPathway"/>
</dbReference>
<dbReference type="CDD" id="cd00332">
    <property type="entry name" value="PAL-HAL"/>
    <property type="match status" value="1"/>
</dbReference>
<dbReference type="FunFam" id="1.10.275.10:FF:000005">
    <property type="entry name" value="Histidine ammonia-lyase"/>
    <property type="match status" value="1"/>
</dbReference>
<dbReference type="FunFam" id="1.20.200.10:FF:000003">
    <property type="entry name" value="Histidine ammonia-lyase"/>
    <property type="match status" value="1"/>
</dbReference>
<dbReference type="Gene3D" id="1.20.200.10">
    <property type="entry name" value="Fumarase/aspartase (Central domain)"/>
    <property type="match status" value="1"/>
</dbReference>
<dbReference type="Gene3D" id="1.10.275.10">
    <property type="entry name" value="Fumarase/aspartase (N-terminal domain)"/>
    <property type="match status" value="1"/>
</dbReference>
<dbReference type="HAMAP" id="MF_00229">
    <property type="entry name" value="His_ammonia_lyase"/>
    <property type="match status" value="1"/>
</dbReference>
<dbReference type="InterPro" id="IPR001106">
    <property type="entry name" value="Aromatic_Lyase"/>
</dbReference>
<dbReference type="InterPro" id="IPR024083">
    <property type="entry name" value="Fumarase/histidase_N"/>
</dbReference>
<dbReference type="InterPro" id="IPR005921">
    <property type="entry name" value="HutH"/>
</dbReference>
<dbReference type="InterPro" id="IPR008948">
    <property type="entry name" value="L-Aspartase-like"/>
</dbReference>
<dbReference type="InterPro" id="IPR022313">
    <property type="entry name" value="Phe/His_NH3-lyase_AS"/>
</dbReference>
<dbReference type="NCBIfam" id="TIGR01225">
    <property type="entry name" value="hutH"/>
    <property type="match status" value="1"/>
</dbReference>
<dbReference type="NCBIfam" id="NF006871">
    <property type="entry name" value="PRK09367.1"/>
    <property type="match status" value="1"/>
</dbReference>
<dbReference type="PANTHER" id="PTHR10362">
    <property type="entry name" value="HISTIDINE AMMONIA-LYASE"/>
    <property type="match status" value="1"/>
</dbReference>
<dbReference type="Pfam" id="PF00221">
    <property type="entry name" value="Lyase_aromatic"/>
    <property type="match status" value="1"/>
</dbReference>
<dbReference type="SUPFAM" id="SSF48557">
    <property type="entry name" value="L-aspartase-like"/>
    <property type="match status" value="1"/>
</dbReference>
<dbReference type="PROSITE" id="PS00488">
    <property type="entry name" value="PAL_HISTIDASE"/>
    <property type="match status" value="1"/>
</dbReference>
<accession>Q5X9K4</accession>
<protein>
    <recommendedName>
        <fullName evidence="1">Histidine ammonia-lyase</fullName>
        <shortName evidence="1">Histidase</shortName>
        <ecNumber evidence="1">4.3.1.3</ecNumber>
    </recommendedName>
</protein>
<keyword id="KW-0963">Cytoplasm</keyword>
<keyword id="KW-0369">Histidine metabolism</keyword>
<keyword id="KW-0456">Lyase</keyword>
<evidence type="ECO:0000255" key="1">
    <source>
        <dbReference type="HAMAP-Rule" id="MF_00229"/>
    </source>
</evidence>
<evidence type="ECO:0000305" key="2"/>
<feature type="chain" id="PRO_0000161041" description="Histidine ammonia-lyase">
    <location>
        <begin position="1"/>
        <end position="513"/>
    </location>
</feature>
<feature type="modified residue" description="2,3-didehydroalanine (Ser)" evidence="1">
    <location>
        <position position="145"/>
    </location>
</feature>
<feature type="cross-link" description="5-imidazolinone (Ala-Gly)" evidence="1">
    <location>
        <begin position="144"/>
        <end position="146"/>
    </location>
</feature>
<organism>
    <name type="scientific">Streptococcus pyogenes serotype M6 (strain ATCC BAA-946 / MGAS10394)</name>
    <dbReference type="NCBI Taxonomy" id="286636"/>
    <lineage>
        <taxon>Bacteria</taxon>
        <taxon>Bacillati</taxon>
        <taxon>Bacillota</taxon>
        <taxon>Bacilli</taxon>
        <taxon>Lactobacillales</taxon>
        <taxon>Streptococcaceae</taxon>
        <taxon>Streptococcus</taxon>
    </lineage>
</organism>
<reference key="1">
    <citation type="journal article" date="2004" name="J. Infect. Dis.">
        <title>Progress toward characterization of the group A Streptococcus metagenome: complete genome sequence of a macrolide-resistant serotype M6 strain.</title>
        <authorList>
            <person name="Banks D.J."/>
            <person name="Porcella S.F."/>
            <person name="Barbian K.D."/>
            <person name="Beres S.B."/>
            <person name="Philips L.E."/>
            <person name="Voyich J.M."/>
            <person name="DeLeo F.R."/>
            <person name="Martin J.M."/>
            <person name="Somerville G.A."/>
            <person name="Musser J.M."/>
        </authorList>
    </citation>
    <scope>NUCLEOTIDE SEQUENCE [LARGE SCALE GENOMIC DNA]</scope>
    <source>
        <strain>ATCC BAA-946 / MGAS10394</strain>
    </source>
</reference>
<gene>
    <name evidence="1" type="primary">hutH</name>
    <name type="ordered locus">M6_Spy1774</name>
</gene>
<name>HUTH_STRP6</name>
<sequence>MTRVINLDGESLTIEDVIAIARQGVACRIDDSAIEAVNASRKIVDDIVSEKRVVYGVTTGFGSLCNVSISPEDTVQLQENLIRTHASGFGDPLPEDAVRAIMLIRINSLVKGYSGIRLSTIEKLLELLNKGVHPYIPEKGSLGASGDLAPLAHMVLPMLGLGKAYYKGELLSGQEALDKAGIDKISLAAKEGLALINGTTVLTAIGALATYDAIQLLKLSDLAGALSLEVHNGITSPFEENLHTIRPQSGQLATARNIRNLLEGSQNTTVATQSRVQDPYTLRCLPQIHGASKDSIAYVKSKVDIEINSVTDNPIICKDGHVISGGNFHGEPMAQPFDFLGIAISEIGNVSERRVERLVNSQLSKLPSFLVKYPGLNSGFMITQYACASLASENKVLAHPASVDSIPSCENQEDFVSMGTTAARKAFEILKNSRRIVATEIMAACQALDLKPENHELGKGTKVAYDLFRKEVNFIEHDKHIEIYDELNKASAVIEDPSFLEAVEQAVELSIQF</sequence>
<comment type="catalytic activity">
    <reaction evidence="1">
        <text>L-histidine = trans-urocanate + NH4(+)</text>
        <dbReference type="Rhea" id="RHEA:21232"/>
        <dbReference type="ChEBI" id="CHEBI:17771"/>
        <dbReference type="ChEBI" id="CHEBI:28938"/>
        <dbReference type="ChEBI" id="CHEBI:57595"/>
        <dbReference type="EC" id="4.3.1.3"/>
    </reaction>
</comment>
<comment type="pathway">
    <text evidence="1">Amino-acid degradation; L-histidine degradation into L-glutamate; N-formimidoyl-L-glutamate from L-histidine: step 1/3.</text>
</comment>
<comment type="subcellular location">
    <subcellularLocation>
        <location evidence="1">Cytoplasm</location>
    </subcellularLocation>
</comment>
<comment type="PTM">
    <text evidence="1">Contains an active site 4-methylidene-imidazol-5-one (MIO), which is formed autocatalytically by cyclization and dehydration of residues Ala-Ser-Gly.</text>
</comment>
<comment type="similarity">
    <text evidence="1">Belongs to the PAL/histidase family.</text>
</comment>
<comment type="sequence caution" evidence="2">
    <conflict type="frameshift">
        <sequence resource="EMBL-CDS" id="AAT87909"/>
    </conflict>
</comment>
<proteinExistence type="inferred from homology"/>